<accession>Q46IW3</accession>
<reference key="1">
    <citation type="journal article" date="2007" name="PLoS Genet.">
        <title>Patterns and implications of gene gain and loss in the evolution of Prochlorococcus.</title>
        <authorList>
            <person name="Kettler G.C."/>
            <person name="Martiny A.C."/>
            <person name="Huang K."/>
            <person name="Zucker J."/>
            <person name="Coleman M.L."/>
            <person name="Rodrigue S."/>
            <person name="Chen F."/>
            <person name="Lapidus A."/>
            <person name="Ferriera S."/>
            <person name="Johnson J."/>
            <person name="Steglich C."/>
            <person name="Church G.M."/>
            <person name="Richardson P."/>
            <person name="Chisholm S.W."/>
        </authorList>
    </citation>
    <scope>NUCLEOTIDE SEQUENCE [LARGE SCALE GENOMIC DNA]</scope>
    <source>
        <strain>NATL2A</strain>
    </source>
</reference>
<dbReference type="EMBL" id="CP000095">
    <property type="protein sequence ID" value="AAZ58565.1"/>
    <property type="molecule type" value="Genomic_DNA"/>
</dbReference>
<dbReference type="RefSeq" id="WP_011295419.1">
    <property type="nucleotide sequence ID" value="NC_007335.2"/>
</dbReference>
<dbReference type="SMR" id="Q46IW3"/>
<dbReference type="STRING" id="59920.PMN2A_1075"/>
<dbReference type="KEGG" id="pmn:PMN2A_1075"/>
<dbReference type="HOGENOM" id="CLU_002794_4_1_3"/>
<dbReference type="OrthoDB" id="580826at2"/>
<dbReference type="PhylomeDB" id="Q46IW3"/>
<dbReference type="Proteomes" id="UP000002535">
    <property type="component" value="Chromosome"/>
</dbReference>
<dbReference type="GO" id="GO:0005737">
    <property type="term" value="C:cytoplasm"/>
    <property type="evidence" value="ECO:0007669"/>
    <property type="project" value="UniProtKB-SubCell"/>
</dbReference>
<dbReference type="GO" id="GO:0005525">
    <property type="term" value="F:GTP binding"/>
    <property type="evidence" value="ECO:0007669"/>
    <property type="project" value="UniProtKB-UniRule"/>
</dbReference>
<dbReference type="GO" id="GO:0003924">
    <property type="term" value="F:GTPase activity"/>
    <property type="evidence" value="ECO:0007669"/>
    <property type="project" value="InterPro"/>
</dbReference>
<dbReference type="GO" id="GO:0003746">
    <property type="term" value="F:translation elongation factor activity"/>
    <property type="evidence" value="ECO:0007669"/>
    <property type="project" value="UniProtKB-UniRule"/>
</dbReference>
<dbReference type="GO" id="GO:0032790">
    <property type="term" value="P:ribosome disassembly"/>
    <property type="evidence" value="ECO:0007669"/>
    <property type="project" value="TreeGrafter"/>
</dbReference>
<dbReference type="CDD" id="cd01886">
    <property type="entry name" value="EF-G"/>
    <property type="match status" value="1"/>
</dbReference>
<dbReference type="CDD" id="cd16262">
    <property type="entry name" value="EFG_III"/>
    <property type="match status" value="1"/>
</dbReference>
<dbReference type="CDD" id="cd01434">
    <property type="entry name" value="EFG_mtEFG1_IV"/>
    <property type="match status" value="1"/>
</dbReference>
<dbReference type="CDD" id="cd03713">
    <property type="entry name" value="EFG_mtEFG_C"/>
    <property type="match status" value="1"/>
</dbReference>
<dbReference type="CDD" id="cd04088">
    <property type="entry name" value="EFG_mtEFG_II"/>
    <property type="match status" value="1"/>
</dbReference>
<dbReference type="FunFam" id="2.40.30.10:FF:000006">
    <property type="entry name" value="Elongation factor G"/>
    <property type="match status" value="1"/>
</dbReference>
<dbReference type="FunFam" id="3.30.230.10:FF:000003">
    <property type="entry name" value="Elongation factor G"/>
    <property type="match status" value="1"/>
</dbReference>
<dbReference type="FunFam" id="3.30.70.240:FF:000001">
    <property type="entry name" value="Elongation factor G"/>
    <property type="match status" value="1"/>
</dbReference>
<dbReference type="FunFam" id="3.30.70.870:FF:000001">
    <property type="entry name" value="Elongation factor G"/>
    <property type="match status" value="1"/>
</dbReference>
<dbReference type="FunFam" id="3.40.50.300:FF:000029">
    <property type="entry name" value="Elongation factor G"/>
    <property type="match status" value="1"/>
</dbReference>
<dbReference type="Gene3D" id="3.30.230.10">
    <property type="match status" value="1"/>
</dbReference>
<dbReference type="Gene3D" id="3.30.70.240">
    <property type="match status" value="1"/>
</dbReference>
<dbReference type="Gene3D" id="3.30.70.870">
    <property type="entry name" value="Elongation Factor G (Translational Gtpase), domain 3"/>
    <property type="match status" value="1"/>
</dbReference>
<dbReference type="Gene3D" id="3.40.50.300">
    <property type="entry name" value="P-loop containing nucleotide triphosphate hydrolases"/>
    <property type="match status" value="1"/>
</dbReference>
<dbReference type="Gene3D" id="2.40.30.10">
    <property type="entry name" value="Translation factors"/>
    <property type="match status" value="1"/>
</dbReference>
<dbReference type="HAMAP" id="MF_00054_B">
    <property type="entry name" value="EF_G_EF_2_B"/>
    <property type="match status" value="1"/>
</dbReference>
<dbReference type="InterPro" id="IPR041095">
    <property type="entry name" value="EFG_II"/>
</dbReference>
<dbReference type="InterPro" id="IPR009022">
    <property type="entry name" value="EFG_III"/>
</dbReference>
<dbReference type="InterPro" id="IPR035647">
    <property type="entry name" value="EFG_III/V"/>
</dbReference>
<dbReference type="InterPro" id="IPR047872">
    <property type="entry name" value="EFG_IV"/>
</dbReference>
<dbReference type="InterPro" id="IPR035649">
    <property type="entry name" value="EFG_V"/>
</dbReference>
<dbReference type="InterPro" id="IPR000640">
    <property type="entry name" value="EFG_V-like"/>
</dbReference>
<dbReference type="InterPro" id="IPR004161">
    <property type="entry name" value="EFTu-like_2"/>
</dbReference>
<dbReference type="InterPro" id="IPR031157">
    <property type="entry name" value="G_TR_CS"/>
</dbReference>
<dbReference type="InterPro" id="IPR027417">
    <property type="entry name" value="P-loop_NTPase"/>
</dbReference>
<dbReference type="InterPro" id="IPR020568">
    <property type="entry name" value="Ribosomal_Su5_D2-typ_SF"/>
</dbReference>
<dbReference type="InterPro" id="IPR014721">
    <property type="entry name" value="Ribsml_uS5_D2-typ_fold_subgr"/>
</dbReference>
<dbReference type="InterPro" id="IPR005225">
    <property type="entry name" value="Small_GTP-bd"/>
</dbReference>
<dbReference type="InterPro" id="IPR000795">
    <property type="entry name" value="T_Tr_GTP-bd_dom"/>
</dbReference>
<dbReference type="InterPro" id="IPR009000">
    <property type="entry name" value="Transl_B-barrel_sf"/>
</dbReference>
<dbReference type="InterPro" id="IPR004540">
    <property type="entry name" value="Transl_elong_EFG/EF2"/>
</dbReference>
<dbReference type="InterPro" id="IPR005517">
    <property type="entry name" value="Transl_elong_EFG/EF2_IV"/>
</dbReference>
<dbReference type="NCBIfam" id="TIGR00484">
    <property type="entry name" value="EF-G"/>
    <property type="match status" value="1"/>
</dbReference>
<dbReference type="NCBIfam" id="NF009379">
    <property type="entry name" value="PRK12740.1-3"/>
    <property type="match status" value="1"/>
</dbReference>
<dbReference type="NCBIfam" id="NF009381">
    <property type="entry name" value="PRK12740.1-5"/>
    <property type="match status" value="1"/>
</dbReference>
<dbReference type="NCBIfam" id="NF009891">
    <property type="entry name" value="PRK13351.1-1"/>
    <property type="match status" value="1"/>
</dbReference>
<dbReference type="NCBIfam" id="TIGR00231">
    <property type="entry name" value="small_GTP"/>
    <property type="match status" value="1"/>
</dbReference>
<dbReference type="PANTHER" id="PTHR43261:SF1">
    <property type="entry name" value="RIBOSOME-RELEASING FACTOR 2, MITOCHONDRIAL"/>
    <property type="match status" value="1"/>
</dbReference>
<dbReference type="PANTHER" id="PTHR43261">
    <property type="entry name" value="TRANSLATION ELONGATION FACTOR G-RELATED"/>
    <property type="match status" value="1"/>
</dbReference>
<dbReference type="Pfam" id="PF00679">
    <property type="entry name" value="EFG_C"/>
    <property type="match status" value="1"/>
</dbReference>
<dbReference type="Pfam" id="PF14492">
    <property type="entry name" value="EFG_III"/>
    <property type="match status" value="1"/>
</dbReference>
<dbReference type="Pfam" id="PF03764">
    <property type="entry name" value="EFG_IV"/>
    <property type="match status" value="1"/>
</dbReference>
<dbReference type="Pfam" id="PF00009">
    <property type="entry name" value="GTP_EFTU"/>
    <property type="match status" value="1"/>
</dbReference>
<dbReference type="Pfam" id="PF03144">
    <property type="entry name" value="GTP_EFTU_D2"/>
    <property type="match status" value="1"/>
</dbReference>
<dbReference type="PRINTS" id="PR00315">
    <property type="entry name" value="ELONGATNFCT"/>
</dbReference>
<dbReference type="SMART" id="SM00838">
    <property type="entry name" value="EFG_C"/>
    <property type="match status" value="1"/>
</dbReference>
<dbReference type="SMART" id="SM00889">
    <property type="entry name" value="EFG_IV"/>
    <property type="match status" value="1"/>
</dbReference>
<dbReference type="SUPFAM" id="SSF54980">
    <property type="entry name" value="EF-G C-terminal domain-like"/>
    <property type="match status" value="2"/>
</dbReference>
<dbReference type="SUPFAM" id="SSF52540">
    <property type="entry name" value="P-loop containing nucleoside triphosphate hydrolases"/>
    <property type="match status" value="1"/>
</dbReference>
<dbReference type="SUPFAM" id="SSF54211">
    <property type="entry name" value="Ribosomal protein S5 domain 2-like"/>
    <property type="match status" value="1"/>
</dbReference>
<dbReference type="SUPFAM" id="SSF50447">
    <property type="entry name" value="Translation proteins"/>
    <property type="match status" value="1"/>
</dbReference>
<dbReference type="PROSITE" id="PS00301">
    <property type="entry name" value="G_TR_1"/>
    <property type="match status" value="1"/>
</dbReference>
<dbReference type="PROSITE" id="PS51722">
    <property type="entry name" value="G_TR_2"/>
    <property type="match status" value="1"/>
</dbReference>
<keyword id="KW-0963">Cytoplasm</keyword>
<keyword id="KW-0251">Elongation factor</keyword>
<keyword id="KW-0342">GTP-binding</keyword>
<keyword id="KW-0547">Nucleotide-binding</keyword>
<keyword id="KW-0648">Protein biosynthesis</keyword>
<keyword id="KW-1185">Reference proteome</keyword>
<proteinExistence type="inferred from homology"/>
<evidence type="ECO:0000255" key="1">
    <source>
        <dbReference type="HAMAP-Rule" id="MF_00054"/>
    </source>
</evidence>
<sequence length="691" mass="75558">MARAFPLERVRNIGIAAHIDAGKTTCTERILFYSGVVHKMGEVHDGAAVTDWMAQERERGITITAAAISTTWDDHRINIIDTPGHVDFTIEVERSMRVLDGVIAVFCAVGGVQPQSETVWRQADRYSVPRMVFVNKMDRTGADFLKVHGQIKDRLKANAVPIQLPIGAENDLKGIIDLVENKAYIYKDDLGKDIEQTEVPSDMVDLVSDWRSKLMESIAETEEELLEAFLENGELTIEQLKSGIREGVLKHGVVPMLCGSAFKNKGVQLLLDAVVNYLPAPVDVPPIQGLLPNGKEAVRPSDDGAPFSALAFKVMADPYGKLTFVRMYSGVLEKGSYVLNSTKDAKERISRLIILKADDREEVDELRAGDLGAVLGLKNTTTGDTLCASEEAIVLETLYIPEPVISVAVEPKTKSDMEKLGKALTSLSEEDPTFRVSTDQETNQTVIAGMGELHLEILVDRMLREFKVEANIGAPQVSYRETIRASSSGEGKFARQTGGKGQYGHVVIEVEPGEPGTGFEFVNKIVGGSVPKEYIKPAESGMRETCESGVIAGYPLIDVKVTLVDGSYHDVDSSEMAFKIAGSMAFKDGIKKCNPVLLEPMMKVEVEVPEDFLGSIIGDLSSRRGQVEGQSIEDGQSKVQSKVPLAEMFGYATQLRSMTQGRGIFSMEFSTYEEVPRNVAEAIISKNQGNS</sequence>
<feature type="chain" id="PRO_0000225226" description="Elongation factor G">
    <location>
        <begin position="1"/>
        <end position="691"/>
    </location>
</feature>
<feature type="domain" description="tr-type G">
    <location>
        <begin position="8"/>
        <end position="282"/>
    </location>
</feature>
<feature type="binding site" evidence="1">
    <location>
        <begin position="17"/>
        <end position="24"/>
    </location>
    <ligand>
        <name>GTP</name>
        <dbReference type="ChEBI" id="CHEBI:37565"/>
    </ligand>
</feature>
<feature type="binding site" evidence="1">
    <location>
        <begin position="81"/>
        <end position="85"/>
    </location>
    <ligand>
        <name>GTP</name>
        <dbReference type="ChEBI" id="CHEBI:37565"/>
    </ligand>
</feature>
<feature type="binding site" evidence="1">
    <location>
        <begin position="135"/>
        <end position="138"/>
    </location>
    <ligand>
        <name>GTP</name>
        <dbReference type="ChEBI" id="CHEBI:37565"/>
    </ligand>
</feature>
<comment type="function">
    <text evidence="1">Catalyzes the GTP-dependent ribosomal translocation step during translation elongation. During this step, the ribosome changes from the pre-translocational (PRE) to the post-translocational (POST) state as the newly formed A-site-bound peptidyl-tRNA and P-site-bound deacylated tRNA move to the P and E sites, respectively. Catalyzes the coordinated movement of the two tRNA molecules, the mRNA and conformational changes in the ribosome.</text>
</comment>
<comment type="subcellular location">
    <subcellularLocation>
        <location evidence="1">Cytoplasm</location>
    </subcellularLocation>
</comment>
<comment type="similarity">
    <text evidence="1">Belongs to the TRAFAC class translation factor GTPase superfamily. Classic translation factor GTPase family. EF-G/EF-2 subfamily.</text>
</comment>
<gene>
    <name evidence="1" type="primary">fusA</name>
    <name type="ordered locus">PMN2A_1075</name>
</gene>
<name>EFG_PROMT</name>
<organism>
    <name type="scientific">Prochlorococcus marinus (strain NATL2A)</name>
    <dbReference type="NCBI Taxonomy" id="59920"/>
    <lineage>
        <taxon>Bacteria</taxon>
        <taxon>Bacillati</taxon>
        <taxon>Cyanobacteriota</taxon>
        <taxon>Cyanophyceae</taxon>
        <taxon>Synechococcales</taxon>
        <taxon>Prochlorococcaceae</taxon>
        <taxon>Prochlorococcus</taxon>
    </lineage>
</organism>
<protein>
    <recommendedName>
        <fullName evidence="1">Elongation factor G</fullName>
        <shortName evidence="1">EF-G</shortName>
    </recommendedName>
</protein>